<evidence type="ECO:0000255" key="1">
    <source>
        <dbReference type="HAMAP-Rule" id="MF_00736"/>
    </source>
</evidence>
<evidence type="ECO:0000305" key="2"/>
<organism>
    <name type="scientific">Nitrosomonas europaea (strain ATCC 19718 / CIP 103999 / KCTC 2705 / NBRC 14298)</name>
    <dbReference type="NCBI Taxonomy" id="228410"/>
    <lineage>
        <taxon>Bacteria</taxon>
        <taxon>Pseudomonadati</taxon>
        <taxon>Pseudomonadota</taxon>
        <taxon>Betaproteobacteria</taxon>
        <taxon>Nitrosomonadales</taxon>
        <taxon>Nitrosomonadaceae</taxon>
        <taxon>Nitrosomonas</taxon>
    </lineage>
</organism>
<comment type="function">
    <text evidence="1">Forms part of the ribosomal stalk which helps the ribosome interact with GTP-bound translation factors.</text>
</comment>
<comment type="subunit">
    <text evidence="1">Part of the ribosomal stalk of the 50S ribosomal subunit. Interacts with L10 and the large rRNA to form the base of the stalk. L10 forms an elongated spine to which L12 dimers bind in a sequential fashion forming a multimeric L10(L12)X complex.</text>
</comment>
<comment type="PTM">
    <text evidence="1">One or more lysine residues are methylated.</text>
</comment>
<comment type="similarity">
    <text evidence="1">Belongs to the universal ribosomal protein uL11 family.</text>
</comment>
<feature type="chain" id="PRO_0000104328" description="Large ribosomal subunit protein uL11">
    <location>
        <begin position="1"/>
        <end position="143"/>
    </location>
</feature>
<protein>
    <recommendedName>
        <fullName evidence="1">Large ribosomal subunit protein uL11</fullName>
    </recommendedName>
    <alternativeName>
        <fullName evidence="2">50S ribosomal protein L11</fullName>
    </alternativeName>
</protein>
<proteinExistence type="inferred from homology"/>
<reference key="1">
    <citation type="journal article" date="2003" name="J. Bacteriol.">
        <title>Complete genome sequence of the ammonia-oxidizing bacterium and obligate chemolithoautotroph Nitrosomonas europaea.</title>
        <authorList>
            <person name="Chain P."/>
            <person name="Lamerdin J.E."/>
            <person name="Larimer F.W."/>
            <person name="Regala W."/>
            <person name="Lao V."/>
            <person name="Land M.L."/>
            <person name="Hauser L."/>
            <person name="Hooper A.B."/>
            <person name="Klotz M.G."/>
            <person name="Norton J."/>
            <person name="Sayavedra-Soto L.A."/>
            <person name="Arciero D.M."/>
            <person name="Hommes N.G."/>
            <person name="Whittaker M.M."/>
            <person name="Arp D.J."/>
        </authorList>
    </citation>
    <scope>NUCLEOTIDE SEQUENCE [LARGE SCALE GENOMIC DNA]</scope>
    <source>
        <strain>ATCC 19718 / CIP 103999 / KCTC 2705 / NBRC 14298</strain>
    </source>
</reference>
<keyword id="KW-0488">Methylation</keyword>
<keyword id="KW-1185">Reference proteome</keyword>
<keyword id="KW-0687">Ribonucleoprotein</keyword>
<keyword id="KW-0689">Ribosomal protein</keyword>
<keyword id="KW-0694">RNA-binding</keyword>
<keyword id="KW-0699">rRNA-binding</keyword>
<gene>
    <name evidence="1" type="primary">rplK</name>
    <name type="ordered locus">NE2050</name>
</gene>
<accession>Q82T71</accession>
<name>RL11_NITEU</name>
<sequence>MAKKIVGYIKLQIPAGKANPSPPVGPALGQRQLNIMEFCKAFNAATQKMEPGLPVPVVITAYADKSFTFILKTTPASVLIKKLAGLSKGSAQPHVDKVGKLTRSQAEEIAKIKMADLTAADMDAAVRTIAGSARSMGVEVDGV</sequence>
<dbReference type="EMBL" id="AL954747">
    <property type="protein sequence ID" value="CAD85961.1"/>
    <property type="molecule type" value="Genomic_DNA"/>
</dbReference>
<dbReference type="RefSeq" id="WP_011112563.1">
    <property type="nucleotide sequence ID" value="NC_004757.1"/>
</dbReference>
<dbReference type="SMR" id="Q82T71"/>
<dbReference type="STRING" id="228410.NE2050"/>
<dbReference type="GeneID" id="87105187"/>
<dbReference type="KEGG" id="neu:NE2050"/>
<dbReference type="eggNOG" id="COG0080">
    <property type="taxonomic scope" value="Bacteria"/>
</dbReference>
<dbReference type="HOGENOM" id="CLU_074237_2_0_4"/>
<dbReference type="OrthoDB" id="9802408at2"/>
<dbReference type="PhylomeDB" id="Q82T71"/>
<dbReference type="Proteomes" id="UP000001416">
    <property type="component" value="Chromosome"/>
</dbReference>
<dbReference type="GO" id="GO:0022625">
    <property type="term" value="C:cytosolic large ribosomal subunit"/>
    <property type="evidence" value="ECO:0007669"/>
    <property type="project" value="TreeGrafter"/>
</dbReference>
<dbReference type="GO" id="GO:0070180">
    <property type="term" value="F:large ribosomal subunit rRNA binding"/>
    <property type="evidence" value="ECO:0007669"/>
    <property type="project" value="UniProtKB-UniRule"/>
</dbReference>
<dbReference type="GO" id="GO:0003735">
    <property type="term" value="F:structural constituent of ribosome"/>
    <property type="evidence" value="ECO:0007669"/>
    <property type="project" value="InterPro"/>
</dbReference>
<dbReference type="GO" id="GO:0006412">
    <property type="term" value="P:translation"/>
    <property type="evidence" value="ECO:0007669"/>
    <property type="project" value="UniProtKB-UniRule"/>
</dbReference>
<dbReference type="CDD" id="cd00349">
    <property type="entry name" value="Ribosomal_L11"/>
    <property type="match status" value="1"/>
</dbReference>
<dbReference type="FunFam" id="1.10.10.250:FF:000001">
    <property type="entry name" value="50S ribosomal protein L11"/>
    <property type="match status" value="1"/>
</dbReference>
<dbReference type="FunFam" id="3.30.1550.10:FF:000001">
    <property type="entry name" value="50S ribosomal protein L11"/>
    <property type="match status" value="1"/>
</dbReference>
<dbReference type="Gene3D" id="1.10.10.250">
    <property type="entry name" value="Ribosomal protein L11, C-terminal domain"/>
    <property type="match status" value="1"/>
</dbReference>
<dbReference type="Gene3D" id="3.30.1550.10">
    <property type="entry name" value="Ribosomal protein L11/L12, N-terminal domain"/>
    <property type="match status" value="1"/>
</dbReference>
<dbReference type="HAMAP" id="MF_00736">
    <property type="entry name" value="Ribosomal_uL11"/>
    <property type="match status" value="1"/>
</dbReference>
<dbReference type="InterPro" id="IPR000911">
    <property type="entry name" value="Ribosomal_uL11"/>
</dbReference>
<dbReference type="InterPro" id="IPR006519">
    <property type="entry name" value="Ribosomal_uL11_bac-typ"/>
</dbReference>
<dbReference type="InterPro" id="IPR020783">
    <property type="entry name" value="Ribosomal_uL11_C"/>
</dbReference>
<dbReference type="InterPro" id="IPR036769">
    <property type="entry name" value="Ribosomal_uL11_C_sf"/>
</dbReference>
<dbReference type="InterPro" id="IPR020785">
    <property type="entry name" value="Ribosomal_uL11_CS"/>
</dbReference>
<dbReference type="InterPro" id="IPR020784">
    <property type="entry name" value="Ribosomal_uL11_N"/>
</dbReference>
<dbReference type="InterPro" id="IPR036796">
    <property type="entry name" value="Ribosomal_uL11_N_sf"/>
</dbReference>
<dbReference type="NCBIfam" id="TIGR01632">
    <property type="entry name" value="L11_bact"/>
    <property type="match status" value="1"/>
</dbReference>
<dbReference type="PANTHER" id="PTHR11661">
    <property type="entry name" value="60S RIBOSOMAL PROTEIN L12"/>
    <property type="match status" value="1"/>
</dbReference>
<dbReference type="PANTHER" id="PTHR11661:SF1">
    <property type="entry name" value="LARGE RIBOSOMAL SUBUNIT PROTEIN UL11M"/>
    <property type="match status" value="1"/>
</dbReference>
<dbReference type="Pfam" id="PF00298">
    <property type="entry name" value="Ribosomal_L11"/>
    <property type="match status" value="1"/>
</dbReference>
<dbReference type="Pfam" id="PF03946">
    <property type="entry name" value="Ribosomal_L11_N"/>
    <property type="match status" value="1"/>
</dbReference>
<dbReference type="SMART" id="SM00649">
    <property type="entry name" value="RL11"/>
    <property type="match status" value="1"/>
</dbReference>
<dbReference type="SUPFAM" id="SSF54747">
    <property type="entry name" value="Ribosomal L11/L12e N-terminal domain"/>
    <property type="match status" value="1"/>
</dbReference>
<dbReference type="SUPFAM" id="SSF46906">
    <property type="entry name" value="Ribosomal protein L11, C-terminal domain"/>
    <property type="match status" value="1"/>
</dbReference>
<dbReference type="PROSITE" id="PS00359">
    <property type="entry name" value="RIBOSOMAL_L11"/>
    <property type="match status" value="1"/>
</dbReference>